<protein>
    <recommendedName>
        <fullName evidence="1">Phosphate acyltransferase</fullName>
        <ecNumber evidence="1">2.3.1.274</ecNumber>
    </recommendedName>
    <alternativeName>
        <fullName evidence="1">Acyl-ACP phosphotransacylase</fullName>
    </alternativeName>
    <alternativeName>
        <fullName evidence="1">Acyl-[acyl-carrier-protein]--phosphate acyltransferase</fullName>
    </alternativeName>
    <alternativeName>
        <fullName evidence="1">Phosphate-acyl-ACP acyltransferase</fullName>
    </alternativeName>
</protein>
<organism>
    <name type="scientific">Thermosipho africanus (strain TCF52B)</name>
    <dbReference type="NCBI Taxonomy" id="484019"/>
    <lineage>
        <taxon>Bacteria</taxon>
        <taxon>Thermotogati</taxon>
        <taxon>Thermotogota</taxon>
        <taxon>Thermotogae</taxon>
        <taxon>Thermotogales</taxon>
        <taxon>Fervidobacteriaceae</taxon>
        <taxon>Thermosipho</taxon>
    </lineage>
</organism>
<accession>B7IGQ4</accession>
<sequence>MKKIAIDLMGGDYAPEEILAGALSFAKENEDVELYLVGIEENFKDVQLPKNCVKVVTDDFLPMDVKPTEAVRRRKSTMYVSCQLAREKKVDAVVSAGNTGALLACATFVVGRIKGIERPTLAVPIPTKNDFCVLADAGANIDVKPSNLLQFAIMGVEYAKLLGKDNPTIGLLNVGTEENKGTQKEKEAFQILKERFGNQFVGNVEGNDLNAGKVDVVVADGFHGNIAMKTMEGAAKMITELIKSEVKKNIISALGALLMKPVFSSLKNKLDPKKYGGTFFIGVEGVVVKAHGNSNRTAIFNALKVAKKGVEEKLPLKIKEALLKCAE</sequence>
<evidence type="ECO:0000255" key="1">
    <source>
        <dbReference type="HAMAP-Rule" id="MF_00019"/>
    </source>
</evidence>
<comment type="function">
    <text evidence="1">Catalyzes the reversible formation of acyl-phosphate (acyl-PO(4)) from acyl-[acyl-carrier-protein] (acyl-ACP). This enzyme utilizes acyl-ACP as fatty acyl donor, but not acyl-CoA.</text>
</comment>
<comment type="catalytic activity">
    <reaction evidence="1">
        <text>a fatty acyl-[ACP] + phosphate = an acyl phosphate + holo-[ACP]</text>
        <dbReference type="Rhea" id="RHEA:42292"/>
        <dbReference type="Rhea" id="RHEA-COMP:9685"/>
        <dbReference type="Rhea" id="RHEA-COMP:14125"/>
        <dbReference type="ChEBI" id="CHEBI:43474"/>
        <dbReference type="ChEBI" id="CHEBI:59918"/>
        <dbReference type="ChEBI" id="CHEBI:64479"/>
        <dbReference type="ChEBI" id="CHEBI:138651"/>
        <dbReference type="EC" id="2.3.1.274"/>
    </reaction>
</comment>
<comment type="pathway">
    <text evidence="1">Lipid metabolism; phospholipid metabolism.</text>
</comment>
<comment type="subunit">
    <text evidence="1">Homodimer. Probably interacts with PlsY.</text>
</comment>
<comment type="subcellular location">
    <subcellularLocation>
        <location evidence="1">Cytoplasm</location>
    </subcellularLocation>
    <text evidence="1">Associated with the membrane possibly through PlsY.</text>
</comment>
<comment type="similarity">
    <text evidence="1">Belongs to the PlsX family.</text>
</comment>
<reference key="1">
    <citation type="journal article" date="2009" name="J. Bacteriol.">
        <title>The genome of Thermosipho africanus TCF52B: lateral genetic connections to the Firmicutes and Archaea.</title>
        <authorList>
            <person name="Nesboe C.L."/>
            <person name="Bapteste E."/>
            <person name="Curtis B."/>
            <person name="Dahle H."/>
            <person name="Lopez P."/>
            <person name="Macleod D."/>
            <person name="Dlutek M."/>
            <person name="Bowman S."/>
            <person name="Zhaxybayeva O."/>
            <person name="Birkeland N.-K."/>
            <person name="Doolittle W.F."/>
        </authorList>
    </citation>
    <scope>NUCLEOTIDE SEQUENCE [LARGE SCALE GENOMIC DNA]</scope>
    <source>
        <strain>TCF52B</strain>
    </source>
</reference>
<feature type="chain" id="PRO_1000116384" description="Phosphate acyltransferase">
    <location>
        <begin position="1"/>
        <end position="327"/>
    </location>
</feature>
<gene>
    <name evidence="1" type="primary">plsX</name>
    <name type="ordered locus">THA_806</name>
</gene>
<name>PLSX_THEAB</name>
<dbReference type="EC" id="2.3.1.274" evidence="1"/>
<dbReference type="EMBL" id="CP001185">
    <property type="protein sequence ID" value="ACJ75268.1"/>
    <property type="molecule type" value="Genomic_DNA"/>
</dbReference>
<dbReference type="RefSeq" id="WP_012579808.1">
    <property type="nucleotide sequence ID" value="NC_011653.1"/>
</dbReference>
<dbReference type="SMR" id="B7IGQ4"/>
<dbReference type="STRING" id="484019.THA_806"/>
<dbReference type="KEGG" id="taf:THA_806"/>
<dbReference type="eggNOG" id="COG0416">
    <property type="taxonomic scope" value="Bacteria"/>
</dbReference>
<dbReference type="HOGENOM" id="CLU_039379_1_1_0"/>
<dbReference type="OrthoDB" id="9806408at2"/>
<dbReference type="UniPathway" id="UPA00085"/>
<dbReference type="Proteomes" id="UP000002453">
    <property type="component" value="Chromosome"/>
</dbReference>
<dbReference type="GO" id="GO:0005737">
    <property type="term" value="C:cytoplasm"/>
    <property type="evidence" value="ECO:0007669"/>
    <property type="project" value="UniProtKB-SubCell"/>
</dbReference>
<dbReference type="GO" id="GO:0043811">
    <property type="term" value="F:phosphate:acyl-[acyl carrier protein] acyltransferase activity"/>
    <property type="evidence" value="ECO:0007669"/>
    <property type="project" value="UniProtKB-UniRule"/>
</dbReference>
<dbReference type="GO" id="GO:0006633">
    <property type="term" value="P:fatty acid biosynthetic process"/>
    <property type="evidence" value="ECO:0007669"/>
    <property type="project" value="UniProtKB-UniRule"/>
</dbReference>
<dbReference type="GO" id="GO:0008654">
    <property type="term" value="P:phospholipid biosynthetic process"/>
    <property type="evidence" value="ECO:0007669"/>
    <property type="project" value="UniProtKB-KW"/>
</dbReference>
<dbReference type="Gene3D" id="3.40.718.10">
    <property type="entry name" value="Isopropylmalate Dehydrogenase"/>
    <property type="match status" value="1"/>
</dbReference>
<dbReference type="HAMAP" id="MF_00019">
    <property type="entry name" value="PlsX"/>
    <property type="match status" value="1"/>
</dbReference>
<dbReference type="InterPro" id="IPR003664">
    <property type="entry name" value="FA_synthesis"/>
</dbReference>
<dbReference type="InterPro" id="IPR012281">
    <property type="entry name" value="Phospholipid_synth_PlsX-like"/>
</dbReference>
<dbReference type="NCBIfam" id="TIGR00182">
    <property type="entry name" value="plsX"/>
    <property type="match status" value="1"/>
</dbReference>
<dbReference type="PANTHER" id="PTHR30100">
    <property type="entry name" value="FATTY ACID/PHOSPHOLIPID SYNTHESIS PROTEIN PLSX"/>
    <property type="match status" value="1"/>
</dbReference>
<dbReference type="PANTHER" id="PTHR30100:SF1">
    <property type="entry name" value="PHOSPHATE ACYLTRANSFERASE"/>
    <property type="match status" value="1"/>
</dbReference>
<dbReference type="Pfam" id="PF02504">
    <property type="entry name" value="FA_synthesis"/>
    <property type="match status" value="1"/>
</dbReference>
<dbReference type="PIRSF" id="PIRSF002465">
    <property type="entry name" value="Phsphlp_syn_PlsX"/>
    <property type="match status" value="1"/>
</dbReference>
<dbReference type="SUPFAM" id="SSF53659">
    <property type="entry name" value="Isocitrate/Isopropylmalate dehydrogenase-like"/>
    <property type="match status" value="1"/>
</dbReference>
<keyword id="KW-0963">Cytoplasm</keyword>
<keyword id="KW-0444">Lipid biosynthesis</keyword>
<keyword id="KW-0443">Lipid metabolism</keyword>
<keyword id="KW-0594">Phospholipid biosynthesis</keyword>
<keyword id="KW-1208">Phospholipid metabolism</keyword>
<keyword id="KW-1185">Reference proteome</keyword>
<keyword id="KW-0808">Transferase</keyword>
<proteinExistence type="inferred from homology"/>